<comment type="function">
    <text evidence="1">Catalyzes the hydrolysis of N-succinyl-L,L-diaminopimelic acid (SDAP), forming succinate and LL-2,6-diaminopimelate (DAP), an intermediate involved in the bacterial biosynthesis of lysine and meso-diaminopimelic acid, an essential component of bacterial cell walls.</text>
</comment>
<comment type="catalytic activity">
    <reaction evidence="1">
        <text>N-succinyl-(2S,6S)-2,6-diaminopimelate + H2O = (2S,6S)-2,6-diaminopimelate + succinate</text>
        <dbReference type="Rhea" id="RHEA:22608"/>
        <dbReference type="ChEBI" id="CHEBI:15377"/>
        <dbReference type="ChEBI" id="CHEBI:30031"/>
        <dbReference type="ChEBI" id="CHEBI:57609"/>
        <dbReference type="ChEBI" id="CHEBI:58087"/>
        <dbReference type="EC" id="3.5.1.18"/>
    </reaction>
</comment>
<comment type="cofactor">
    <cofactor evidence="1">
        <name>Zn(2+)</name>
        <dbReference type="ChEBI" id="CHEBI:29105"/>
    </cofactor>
    <cofactor evidence="1">
        <name>Co(2+)</name>
        <dbReference type="ChEBI" id="CHEBI:48828"/>
    </cofactor>
    <text evidence="1">Binds 2 Zn(2+) or Co(2+) ions per subunit.</text>
</comment>
<comment type="pathway">
    <text evidence="1">Amino-acid biosynthesis; L-lysine biosynthesis via DAP pathway; LL-2,6-diaminopimelate from (S)-tetrahydrodipicolinate (succinylase route): step 3/3.</text>
</comment>
<comment type="subunit">
    <text evidence="1">Homodimer.</text>
</comment>
<comment type="similarity">
    <text evidence="1">Belongs to the peptidase M20A family. DapE subfamily.</text>
</comment>
<evidence type="ECO:0000255" key="1">
    <source>
        <dbReference type="HAMAP-Rule" id="MF_01690"/>
    </source>
</evidence>
<dbReference type="EC" id="3.5.1.18" evidence="1"/>
<dbReference type="EMBL" id="AE017143">
    <property type="protein sequence ID" value="AAP95567.1"/>
    <property type="molecule type" value="Genomic_DNA"/>
</dbReference>
<dbReference type="RefSeq" id="WP_010944620.1">
    <property type="nucleotide sequence ID" value="NC_002940.2"/>
</dbReference>
<dbReference type="SMR" id="Q7VNB3"/>
<dbReference type="STRING" id="233412.HD_0642"/>
<dbReference type="KEGG" id="hdu:HD_0642"/>
<dbReference type="eggNOG" id="COG0624">
    <property type="taxonomic scope" value="Bacteria"/>
</dbReference>
<dbReference type="HOGENOM" id="CLU_021802_4_0_6"/>
<dbReference type="OrthoDB" id="9809784at2"/>
<dbReference type="UniPathway" id="UPA00034">
    <property type="reaction ID" value="UER00021"/>
</dbReference>
<dbReference type="Proteomes" id="UP000001022">
    <property type="component" value="Chromosome"/>
</dbReference>
<dbReference type="GO" id="GO:0008777">
    <property type="term" value="F:acetylornithine deacetylase activity"/>
    <property type="evidence" value="ECO:0007669"/>
    <property type="project" value="TreeGrafter"/>
</dbReference>
<dbReference type="GO" id="GO:0050897">
    <property type="term" value="F:cobalt ion binding"/>
    <property type="evidence" value="ECO:0007669"/>
    <property type="project" value="UniProtKB-UniRule"/>
</dbReference>
<dbReference type="GO" id="GO:0009014">
    <property type="term" value="F:succinyl-diaminopimelate desuccinylase activity"/>
    <property type="evidence" value="ECO:0007669"/>
    <property type="project" value="UniProtKB-UniRule"/>
</dbReference>
<dbReference type="GO" id="GO:0008270">
    <property type="term" value="F:zinc ion binding"/>
    <property type="evidence" value="ECO:0007669"/>
    <property type="project" value="UniProtKB-UniRule"/>
</dbReference>
<dbReference type="GO" id="GO:0019877">
    <property type="term" value="P:diaminopimelate biosynthetic process"/>
    <property type="evidence" value="ECO:0007669"/>
    <property type="project" value="UniProtKB-UniRule"/>
</dbReference>
<dbReference type="GO" id="GO:0006526">
    <property type="term" value="P:L-arginine biosynthetic process"/>
    <property type="evidence" value="ECO:0007669"/>
    <property type="project" value="TreeGrafter"/>
</dbReference>
<dbReference type="GO" id="GO:0009089">
    <property type="term" value="P:lysine biosynthetic process via diaminopimelate"/>
    <property type="evidence" value="ECO:0007669"/>
    <property type="project" value="UniProtKB-UniRule"/>
</dbReference>
<dbReference type="CDD" id="cd03891">
    <property type="entry name" value="M20_DapE_proteobac"/>
    <property type="match status" value="1"/>
</dbReference>
<dbReference type="FunFam" id="3.30.70.360:FF:000011">
    <property type="entry name" value="Succinyl-diaminopimelate desuccinylase"/>
    <property type="match status" value="1"/>
</dbReference>
<dbReference type="FunFam" id="3.40.630.10:FF:000005">
    <property type="entry name" value="Succinyl-diaminopimelate desuccinylase"/>
    <property type="match status" value="1"/>
</dbReference>
<dbReference type="Gene3D" id="3.30.70.360">
    <property type="match status" value="1"/>
</dbReference>
<dbReference type="Gene3D" id="3.40.630.10">
    <property type="entry name" value="Zn peptidases"/>
    <property type="match status" value="1"/>
</dbReference>
<dbReference type="HAMAP" id="MF_01690">
    <property type="entry name" value="DapE"/>
    <property type="match status" value="1"/>
</dbReference>
<dbReference type="InterPro" id="IPR001261">
    <property type="entry name" value="ArgE/DapE_CS"/>
</dbReference>
<dbReference type="InterPro" id="IPR036264">
    <property type="entry name" value="Bact_exopeptidase_dim_dom"/>
</dbReference>
<dbReference type="InterPro" id="IPR005941">
    <property type="entry name" value="DapE_proteobac"/>
</dbReference>
<dbReference type="InterPro" id="IPR002933">
    <property type="entry name" value="Peptidase_M20"/>
</dbReference>
<dbReference type="InterPro" id="IPR011650">
    <property type="entry name" value="Peptidase_M20_dimer"/>
</dbReference>
<dbReference type="InterPro" id="IPR050072">
    <property type="entry name" value="Peptidase_M20A"/>
</dbReference>
<dbReference type="NCBIfam" id="TIGR01246">
    <property type="entry name" value="dapE_proteo"/>
    <property type="match status" value="1"/>
</dbReference>
<dbReference type="NCBIfam" id="NF009557">
    <property type="entry name" value="PRK13009.1"/>
    <property type="match status" value="1"/>
</dbReference>
<dbReference type="PANTHER" id="PTHR43808">
    <property type="entry name" value="ACETYLORNITHINE DEACETYLASE"/>
    <property type="match status" value="1"/>
</dbReference>
<dbReference type="PANTHER" id="PTHR43808:SF31">
    <property type="entry name" value="N-ACETYL-L-CITRULLINE DEACETYLASE"/>
    <property type="match status" value="1"/>
</dbReference>
<dbReference type="Pfam" id="PF07687">
    <property type="entry name" value="M20_dimer"/>
    <property type="match status" value="1"/>
</dbReference>
<dbReference type="Pfam" id="PF01546">
    <property type="entry name" value="Peptidase_M20"/>
    <property type="match status" value="1"/>
</dbReference>
<dbReference type="SUPFAM" id="SSF55031">
    <property type="entry name" value="Bacterial exopeptidase dimerisation domain"/>
    <property type="match status" value="1"/>
</dbReference>
<dbReference type="SUPFAM" id="SSF53187">
    <property type="entry name" value="Zn-dependent exopeptidases"/>
    <property type="match status" value="1"/>
</dbReference>
<dbReference type="PROSITE" id="PS00759">
    <property type="entry name" value="ARGE_DAPE_CPG2_2"/>
    <property type="match status" value="1"/>
</dbReference>
<proteinExistence type="inferred from homology"/>
<gene>
    <name evidence="1" type="primary">dapE</name>
    <name type="ordered locus">HD_0642</name>
</gene>
<name>DAPE_HAEDU</name>
<organism>
    <name type="scientific">Haemophilus ducreyi (strain 35000HP / ATCC 700724)</name>
    <dbReference type="NCBI Taxonomy" id="233412"/>
    <lineage>
        <taxon>Bacteria</taxon>
        <taxon>Pseudomonadati</taxon>
        <taxon>Pseudomonadota</taxon>
        <taxon>Gammaproteobacteria</taxon>
        <taxon>Pasteurellales</taxon>
        <taxon>Pasteurellaceae</taxon>
        <taxon>Haemophilus</taxon>
    </lineage>
</organism>
<feature type="chain" id="PRO_0000375575" description="Succinyl-diaminopimelate desuccinylase">
    <location>
        <begin position="1"/>
        <end position="376"/>
    </location>
</feature>
<feature type="active site" evidence="1">
    <location>
        <position position="69"/>
    </location>
</feature>
<feature type="active site" description="Proton acceptor" evidence="1">
    <location>
        <position position="134"/>
    </location>
</feature>
<feature type="binding site" evidence="1">
    <location>
        <position position="67"/>
    </location>
    <ligand>
        <name>Zn(2+)</name>
        <dbReference type="ChEBI" id="CHEBI:29105"/>
        <label>1</label>
    </ligand>
</feature>
<feature type="binding site" evidence="1">
    <location>
        <position position="100"/>
    </location>
    <ligand>
        <name>Zn(2+)</name>
        <dbReference type="ChEBI" id="CHEBI:29105"/>
        <label>1</label>
    </ligand>
</feature>
<feature type="binding site" evidence="1">
    <location>
        <position position="100"/>
    </location>
    <ligand>
        <name>Zn(2+)</name>
        <dbReference type="ChEBI" id="CHEBI:29105"/>
        <label>2</label>
    </ligand>
</feature>
<feature type="binding site" evidence="1">
    <location>
        <position position="135"/>
    </location>
    <ligand>
        <name>Zn(2+)</name>
        <dbReference type="ChEBI" id="CHEBI:29105"/>
        <label>2</label>
    </ligand>
</feature>
<feature type="binding site" evidence="1">
    <location>
        <position position="163"/>
    </location>
    <ligand>
        <name>Zn(2+)</name>
        <dbReference type="ChEBI" id="CHEBI:29105"/>
        <label>1</label>
    </ligand>
</feature>
<feature type="binding site" evidence="1">
    <location>
        <position position="349"/>
    </location>
    <ligand>
        <name>Zn(2+)</name>
        <dbReference type="ChEBI" id="CHEBI:29105"/>
        <label>2</label>
    </ligand>
</feature>
<reference key="1">
    <citation type="submission" date="2003-06" db="EMBL/GenBank/DDBJ databases">
        <title>The complete genome sequence of Haemophilus ducreyi.</title>
        <authorList>
            <person name="Munson R.S. Jr."/>
            <person name="Ray W.C."/>
            <person name="Mahairas G."/>
            <person name="Sabo P."/>
            <person name="Mungur R."/>
            <person name="Johnson L."/>
            <person name="Nguyen D."/>
            <person name="Wang J."/>
            <person name="Forst C."/>
            <person name="Hood L."/>
        </authorList>
    </citation>
    <scope>NUCLEOTIDE SEQUENCE [LARGE SCALE GENOMIC DNA]</scope>
    <source>
        <strain>35000HP / ATCC 700724</strain>
    </source>
</reference>
<accession>Q7VNB3</accession>
<keyword id="KW-0028">Amino-acid biosynthesis</keyword>
<keyword id="KW-0170">Cobalt</keyword>
<keyword id="KW-0220">Diaminopimelate biosynthesis</keyword>
<keyword id="KW-0378">Hydrolase</keyword>
<keyword id="KW-0457">Lysine biosynthesis</keyword>
<keyword id="KW-0479">Metal-binding</keyword>
<keyword id="KW-1185">Reference proteome</keyword>
<keyword id="KW-0862">Zinc</keyword>
<sequence length="376" mass="41318">MKHNIIELAQQLIRNPSISPQDKGCQQIISQRLAAVGFTLEWMPFGDTLNLWATHGNGDPCIVFAGHTDIVPTGDPAQWQYPPFSAIIVDEMLHGRGAADMKGSLAALVIAAENFVRKYPNHSGKIALLITSDEEATAKDGTAKVVETLMARHEKIDYAVIGEPSCSKYLGDIIKNGRRGSITAELYIEGVQGHVAYPHLAQNPIHTSLAFLNELTTYQWDNGNTFFPPTSLQIANIKAGTGNNNVIPGELYLQFNLRYCTEINDQIIKQTVATMLAKYGLQYRIHWHLSGKPFLSSEGKLVNATIQAVENITKHTPRLDTSGGTSDGRFIALMGAEVVEFGPLNATIHKVNECVSTEDLAKCGQIYYQILEQLLT</sequence>
<protein>
    <recommendedName>
        <fullName evidence="1">Succinyl-diaminopimelate desuccinylase</fullName>
        <shortName evidence="1">SDAP desuccinylase</shortName>
        <ecNumber evidence="1">3.5.1.18</ecNumber>
    </recommendedName>
    <alternativeName>
        <fullName evidence="1">N-succinyl-LL-2,6-diaminoheptanedioate amidohydrolase</fullName>
    </alternativeName>
</protein>